<evidence type="ECO:0000255" key="1">
    <source>
        <dbReference type="HAMAP-Rule" id="MF_00514"/>
    </source>
</evidence>
<evidence type="ECO:0000305" key="2"/>
<reference key="1">
    <citation type="journal article" date="2012" name="BMC Microbiol.">
        <title>Genome sequence of Desulfitobacterium hafniense DCB-2, a Gram-positive anaerobe capable of dehalogenation and metal reduction.</title>
        <authorList>
            <person name="Kim S.H."/>
            <person name="Harzman C."/>
            <person name="Davis J.K."/>
            <person name="Hutcheson R."/>
            <person name="Broderick J.B."/>
            <person name="Marsh T.L."/>
            <person name="Tiedje J.M."/>
        </authorList>
    </citation>
    <scope>NUCLEOTIDE SEQUENCE [LARGE SCALE GENOMIC DNA]</scope>
    <source>
        <strain>DSM 10664 / DCB-2</strain>
    </source>
</reference>
<organism>
    <name type="scientific">Desulfitobacterium hafniense (strain DSM 10664 / DCB-2)</name>
    <dbReference type="NCBI Taxonomy" id="272564"/>
    <lineage>
        <taxon>Bacteria</taxon>
        <taxon>Bacillati</taxon>
        <taxon>Bacillota</taxon>
        <taxon>Clostridia</taxon>
        <taxon>Eubacteriales</taxon>
        <taxon>Desulfitobacteriaceae</taxon>
        <taxon>Desulfitobacterium</taxon>
    </lineage>
</organism>
<name>RL35_DESHD</name>
<proteinExistence type="inferred from homology"/>
<keyword id="KW-0687">Ribonucleoprotein</keyword>
<keyword id="KW-0689">Ribosomal protein</keyword>
<comment type="similarity">
    <text evidence="1">Belongs to the bacterial ribosomal protein bL35 family.</text>
</comment>
<protein>
    <recommendedName>
        <fullName evidence="1">Large ribosomal subunit protein bL35</fullName>
    </recommendedName>
    <alternativeName>
        <fullName evidence="2">50S ribosomal protein L35</fullName>
    </alternativeName>
</protein>
<gene>
    <name evidence="1" type="primary">rpmI</name>
    <name type="ordered locus">Dhaf_0216</name>
</gene>
<accession>B8FZK1</accession>
<dbReference type="EMBL" id="CP001336">
    <property type="protein sequence ID" value="ACL18284.1"/>
    <property type="molecule type" value="Genomic_DNA"/>
</dbReference>
<dbReference type="RefSeq" id="WP_005808207.1">
    <property type="nucleotide sequence ID" value="NC_011830.1"/>
</dbReference>
<dbReference type="SMR" id="B8FZK1"/>
<dbReference type="KEGG" id="dhd:Dhaf_0216"/>
<dbReference type="HOGENOM" id="CLU_169643_1_1_9"/>
<dbReference type="Proteomes" id="UP000007726">
    <property type="component" value="Chromosome"/>
</dbReference>
<dbReference type="GO" id="GO:0022625">
    <property type="term" value="C:cytosolic large ribosomal subunit"/>
    <property type="evidence" value="ECO:0007669"/>
    <property type="project" value="TreeGrafter"/>
</dbReference>
<dbReference type="GO" id="GO:0003735">
    <property type="term" value="F:structural constituent of ribosome"/>
    <property type="evidence" value="ECO:0007669"/>
    <property type="project" value="InterPro"/>
</dbReference>
<dbReference type="GO" id="GO:0006412">
    <property type="term" value="P:translation"/>
    <property type="evidence" value="ECO:0007669"/>
    <property type="project" value="UniProtKB-UniRule"/>
</dbReference>
<dbReference type="FunFam" id="4.10.410.60:FF:000001">
    <property type="entry name" value="50S ribosomal protein L35"/>
    <property type="match status" value="1"/>
</dbReference>
<dbReference type="Gene3D" id="4.10.410.60">
    <property type="match status" value="1"/>
</dbReference>
<dbReference type="HAMAP" id="MF_00514">
    <property type="entry name" value="Ribosomal_bL35"/>
    <property type="match status" value="1"/>
</dbReference>
<dbReference type="InterPro" id="IPR001706">
    <property type="entry name" value="Ribosomal_bL35"/>
</dbReference>
<dbReference type="InterPro" id="IPR021137">
    <property type="entry name" value="Ribosomal_bL35-like"/>
</dbReference>
<dbReference type="InterPro" id="IPR018265">
    <property type="entry name" value="Ribosomal_bL35_CS"/>
</dbReference>
<dbReference type="InterPro" id="IPR037229">
    <property type="entry name" value="Ribosomal_bL35_sf"/>
</dbReference>
<dbReference type="NCBIfam" id="TIGR00001">
    <property type="entry name" value="rpmI_bact"/>
    <property type="match status" value="1"/>
</dbReference>
<dbReference type="PANTHER" id="PTHR33343">
    <property type="entry name" value="54S RIBOSOMAL PROTEIN BL35M"/>
    <property type="match status" value="1"/>
</dbReference>
<dbReference type="PANTHER" id="PTHR33343:SF1">
    <property type="entry name" value="LARGE RIBOSOMAL SUBUNIT PROTEIN BL35M"/>
    <property type="match status" value="1"/>
</dbReference>
<dbReference type="Pfam" id="PF01632">
    <property type="entry name" value="Ribosomal_L35p"/>
    <property type="match status" value="1"/>
</dbReference>
<dbReference type="PRINTS" id="PR00064">
    <property type="entry name" value="RIBOSOMALL35"/>
</dbReference>
<dbReference type="SUPFAM" id="SSF143034">
    <property type="entry name" value="L35p-like"/>
    <property type="match status" value="1"/>
</dbReference>
<dbReference type="PROSITE" id="PS00936">
    <property type="entry name" value="RIBOSOMAL_L35"/>
    <property type="match status" value="1"/>
</dbReference>
<feature type="chain" id="PRO_1000194069" description="Large ribosomal subunit protein bL35">
    <location>
        <begin position="1"/>
        <end position="65"/>
    </location>
</feature>
<sequence>MPKMKTHRGAAKRFKKTGTGKIVRHHAFTSHILEKKSPKRKRNLRKGTVMHKTDAKRIARLVAYL</sequence>